<sequence length="429" mass="48281">MKKQRNLRSMAAQAIEQVVEQGQSLSNILPPLQQKVSDKDKALLQELCFGVLRTLSQLDWLINKLMARPMTGKQRTVHYLIMVGLYQLLYTRIPPHAALAETVEGAVAIKRPQLKGLINGVLRQFQRQQDELLAEFNASDARYLHPSWLLKRLQKAYPEQWQSIVEANNQRPPMWLRVNRTHHSRDSWLALLDEAGMKGFPHADYPDAVQLETPAPVHALPGFEEGWVTVQDASAQGCMTWLAPQNGEHILDLCAGPGGKTTHILEVAPEAQVLAVDIDEQRLSRVYDNLKRLGMKATVKQGDGRYPSQWCGEQQFDRILLDAPCSATGVIRRHPDIKWLRRDRDIPELAQLQSEILDAIWSHLKSGGTLVYATCSVLPEENSLQIKAFLQRTADAELCETGTPEQPGKQNLPGAEEGDGFFYAKLIKK</sequence>
<evidence type="ECO:0000255" key="1">
    <source>
        <dbReference type="HAMAP-Rule" id="MF_01856"/>
    </source>
</evidence>
<reference key="1">
    <citation type="journal article" date="2006" name="Mol. Microbiol.">
        <title>Role of pathogenicity island-associated integrases in the genome plasticity of uropathogenic Escherichia coli strain 536.</title>
        <authorList>
            <person name="Hochhut B."/>
            <person name="Wilde C."/>
            <person name="Balling G."/>
            <person name="Middendorf B."/>
            <person name="Dobrindt U."/>
            <person name="Brzuszkiewicz E."/>
            <person name="Gottschalk G."/>
            <person name="Carniel E."/>
            <person name="Hacker J."/>
        </authorList>
    </citation>
    <scope>NUCLEOTIDE SEQUENCE [LARGE SCALE GENOMIC DNA]</scope>
    <source>
        <strain>536 / UPEC</strain>
    </source>
</reference>
<organism>
    <name type="scientific">Escherichia coli O6:K15:H31 (strain 536 / UPEC)</name>
    <dbReference type="NCBI Taxonomy" id="362663"/>
    <lineage>
        <taxon>Bacteria</taxon>
        <taxon>Pseudomonadati</taxon>
        <taxon>Pseudomonadota</taxon>
        <taxon>Gammaproteobacteria</taxon>
        <taxon>Enterobacterales</taxon>
        <taxon>Enterobacteriaceae</taxon>
        <taxon>Escherichia</taxon>
    </lineage>
</organism>
<name>RSMB_ECOL5</name>
<comment type="function">
    <text evidence="1">Specifically methylates the cytosine at position 967 (m5C967) of 16S rRNA.</text>
</comment>
<comment type="catalytic activity">
    <reaction evidence="1">
        <text>cytidine(967) in 16S rRNA + S-adenosyl-L-methionine = 5-methylcytidine(967) in 16S rRNA + S-adenosyl-L-homocysteine + H(+)</text>
        <dbReference type="Rhea" id="RHEA:42748"/>
        <dbReference type="Rhea" id="RHEA-COMP:10219"/>
        <dbReference type="Rhea" id="RHEA-COMP:10220"/>
        <dbReference type="ChEBI" id="CHEBI:15378"/>
        <dbReference type="ChEBI" id="CHEBI:57856"/>
        <dbReference type="ChEBI" id="CHEBI:59789"/>
        <dbReference type="ChEBI" id="CHEBI:74483"/>
        <dbReference type="ChEBI" id="CHEBI:82748"/>
        <dbReference type="EC" id="2.1.1.176"/>
    </reaction>
</comment>
<comment type="subcellular location">
    <subcellularLocation>
        <location evidence="1">Cytoplasm</location>
    </subcellularLocation>
</comment>
<comment type="similarity">
    <text evidence="1">Belongs to the class I-like SAM-binding methyltransferase superfamily. RsmB/NOP family.</text>
</comment>
<gene>
    <name evidence="1" type="primary">rsmB</name>
    <name evidence="1" type="synonym">sun</name>
    <name type="ordered locus">ECP_3376</name>
</gene>
<proteinExistence type="inferred from homology"/>
<dbReference type="EC" id="2.1.1.176" evidence="1"/>
<dbReference type="EMBL" id="CP000247">
    <property type="protein sequence ID" value="ABG71356.1"/>
    <property type="molecule type" value="Genomic_DNA"/>
</dbReference>
<dbReference type="RefSeq" id="WP_000744768.1">
    <property type="nucleotide sequence ID" value="NC_008253.1"/>
</dbReference>
<dbReference type="SMR" id="Q0TCH3"/>
<dbReference type="KEGG" id="ecp:ECP_3376"/>
<dbReference type="HOGENOM" id="CLU_005316_0_4_6"/>
<dbReference type="Proteomes" id="UP000009182">
    <property type="component" value="Chromosome"/>
</dbReference>
<dbReference type="GO" id="GO:0005829">
    <property type="term" value="C:cytosol"/>
    <property type="evidence" value="ECO:0007669"/>
    <property type="project" value="TreeGrafter"/>
</dbReference>
<dbReference type="GO" id="GO:0003723">
    <property type="term" value="F:RNA binding"/>
    <property type="evidence" value="ECO:0007669"/>
    <property type="project" value="UniProtKB-KW"/>
</dbReference>
<dbReference type="GO" id="GO:0009383">
    <property type="term" value="F:rRNA (cytosine-C5-)-methyltransferase activity"/>
    <property type="evidence" value="ECO:0007669"/>
    <property type="project" value="TreeGrafter"/>
</dbReference>
<dbReference type="GO" id="GO:0006355">
    <property type="term" value="P:regulation of DNA-templated transcription"/>
    <property type="evidence" value="ECO:0007669"/>
    <property type="project" value="InterPro"/>
</dbReference>
<dbReference type="GO" id="GO:0070475">
    <property type="term" value="P:rRNA base methylation"/>
    <property type="evidence" value="ECO:0007669"/>
    <property type="project" value="TreeGrafter"/>
</dbReference>
<dbReference type="CDD" id="cd02440">
    <property type="entry name" value="AdoMet_MTases"/>
    <property type="match status" value="1"/>
</dbReference>
<dbReference type="CDD" id="cd00620">
    <property type="entry name" value="Methyltransferase_Sun"/>
    <property type="match status" value="1"/>
</dbReference>
<dbReference type="FunFam" id="1.10.287.730:FF:000001">
    <property type="entry name" value="Ribosomal RNA small subunit methyltransferase B"/>
    <property type="match status" value="1"/>
</dbReference>
<dbReference type="FunFam" id="1.10.940.10:FF:000002">
    <property type="entry name" value="Ribosomal RNA small subunit methyltransferase B"/>
    <property type="match status" value="1"/>
</dbReference>
<dbReference type="FunFam" id="3.30.70.1170:FF:000002">
    <property type="entry name" value="Ribosomal RNA small subunit methyltransferase B"/>
    <property type="match status" value="1"/>
</dbReference>
<dbReference type="FunFam" id="3.40.50.150:FF:000022">
    <property type="entry name" value="Ribosomal RNA small subunit methyltransferase B"/>
    <property type="match status" value="1"/>
</dbReference>
<dbReference type="Gene3D" id="1.10.287.730">
    <property type="entry name" value="Helix hairpin bin"/>
    <property type="match status" value="1"/>
</dbReference>
<dbReference type="Gene3D" id="1.10.940.10">
    <property type="entry name" value="NusB-like"/>
    <property type="match status" value="1"/>
</dbReference>
<dbReference type="Gene3D" id="3.30.70.1170">
    <property type="entry name" value="Sun protein, domain 3"/>
    <property type="match status" value="1"/>
</dbReference>
<dbReference type="Gene3D" id="3.40.50.150">
    <property type="entry name" value="Vaccinia Virus protein VP39"/>
    <property type="match status" value="1"/>
</dbReference>
<dbReference type="HAMAP" id="MF_01856">
    <property type="entry name" value="16SrRNA_methyltr_B"/>
    <property type="match status" value="1"/>
</dbReference>
<dbReference type="InterPro" id="IPR049560">
    <property type="entry name" value="MeTrfase_RsmB-F_NOP2_cat"/>
</dbReference>
<dbReference type="InterPro" id="IPR001678">
    <property type="entry name" value="MeTrfase_RsmB-F_NOP2_dom"/>
</dbReference>
<dbReference type="InterPro" id="IPR035926">
    <property type="entry name" value="NusB-like_sf"/>
</dbReference>
<dbReference type="InterPro" id="IPR006027">
    <property type="entry name" value="NusB_RsmB_TIM44"/>
</dbReference>
<dbReference type="InterPro" id="IPR023267">
    <property type="entry name" value="RCMT"/>
</dbReference>
<dbReference type="InterPro" id="IPR004573">
    <property type="entry name" value="rRNA_ssu_MeTfrase_B"/>
</dbReference>
<dbReference type="InterPro" id="IPR023541">
    <property type="entry name" value="rRNA_ssu_MeTfrase_B_ent"/>
</dbReference>
<dbReference type="InterPro" id="IPR054728">
    <property type="entry name" value="RsmB-like_ferredoxin"/>
</dbReference>
<dbReference type="InterPro" id="IPR048019">
    <property type="entry name" value="RsmB-like_N"/>
</dbReference>
<dbReference type="InterPro" id="IPR018314">
    <property type="entry name" value="RsmB/NOL1/NOP2-like_CS"/>
</dbReference>
<dbReference type="InterPro" id="IPR029063">
    <property type="entry name" value="SAM-dependent_MTases_sf"/>
</dbReference>
<dbReference type="NCBIfam" id="NF008149">
    <property type="entry name" value="PRK10901.1"/>
    <property type="match status" value="1"/>
</dbReference>
<dbReference type="NCBIfam" id="NF011494">
    <property type="entry name" value="PRK14902.1"/>
    <property type="match status" value="1"/>
</dbReference>
<dbReference type="NCBIfam" id="TIGR00563">
    <property type="entry name" value="rsmB"/>
    <property type="match status" value="1"/>
</dbReference>
<dbReference type="PANTHER" id="PTHR22807:SF61">
    <property type="entry name" value="NOL1_NOP2_SUN FAMILY PROTEIN _ ANTITERMINATION NUSB DOMAIN-CONTAINING PROTEIN"/>
    <property type="match status" value="1"/>
</dbReference>
<dbReference type="PANTHER" id="PTHR22807">
    <property type="entry name" value="NOP2 YEAST -RELATED NOL1/NOP2/FMU SUN DOMAIN-CONTAINING"/>
    <property type="match status" value="1"/>
</dbReference>
<dbReference type="Pfam" id="PF01189">
    <property type="entry name" value="Methyltr_RsmB-F"/>
    <property type="match status" value="1"/>
</dbReference>
<dbReference type="Pfam" id="PF01029">
    <property type="entry name" value="NusB"/>
    <property type="match status" value="1"/>
</dbReference>
<dbReference type="Pfam" id="PF22458">
    <property type="entry name" value="RsmF-B_ferredox"/>
    <property type="match status" value="1"/>
</dbReference>
<dbReference type="PRINTS" id="PR02008">
    <property type="entry name" value="RCMTFAMILY"/>
</dbReference>
<dbReference type="SUPFAM" id="SSF48013">
    <property type="entry name" value="NusB-like"/>
    <property type="match status" value="1"/>
</dbReference>
<dbReference type="SUPFAM" id="SSF53335">
    <property type="entry name" value="S-adenosyl-L-methionine-dependent methyltransferases"/>
    <property type="match status" value="1"/>
</dbReference>
<dbReference type="PROSITE" id="PS01153">
    <property type="entry name" value="NOL1_NOP2_SUN"/>
    <property type="match status" value="1"/>
</dbReference>
<dbReference type="PROSITE" id="PS51686">
    <property type="entry name" value="SAM_MT_RSMB_NOP"/>
    <property type="match status" value="1"/>
</dbReference>
<protein>
    <recommendedName>
        <fullName evidence="1">Ribosomal RNA small subunit methyltransferase B</fullName>
        <ecNumber evidence="1">2.1.1.176</ecNumber>
    </recommendedName>
    <alternativeName>
        <fullName evidence="1">16S rRNA m5C967 methyltransferase</fullName>
    </alternativeName>
    <alternativeName>
        <fullName evidence="1">rRNA (cytosine-C(5)-)-methyltransferase RsmB</fullName>
    </alternativeName>
</protein>
<accession>Q0TCH3</accession>
<feature type="chain" id="PRO_0000366158" description="Ribosomal RNA small subunit methyltransferase B">
    <location>
        <begin position="1"/>
        <end position="429"/>
    </location>
</feature>
<feature type="active site" description="Nucleophile" evidence="1">
    <location>
        <position position="375"/>
    </location>
</feature>
<feature type="binding site" evidence="1">
    <location>
        <begin position="254"/>
        <end position="260"/>
    </location>
    <ligand>
        <name>S-adenosyl-L-methionine</name>
        <dbReference type="ChEBI" id="CHEBI:59789"/>
    </ligand>
</feature>
<feature type="binding site" evidence="1">
    <location>
        <position position="277"/>
    </location>
    <ligand>
        <name>S-adenosyl-L-methionine</name>
        <dbReference type="ChEBI" id="CHEBI:59789"/>
    </ligand>
</feature>
<feature type="binding site" evidence="1">
    <location>
        <position position="303"/>
    </location>
    <ligand>
        <name>S-adenosyl-L-methionine</name>
        <dbReference type="ChEBI" id="CHEBI:59789"/>
    </ligand>
</feature>
<feature type="binding site" evidence="1">
    <location>
        <position position="322"/>
    </location>
    <ligand>
        <name>S-adenosyl-L-methionine</name>
        <dbReference type="ChEBI" id="CHEBI:59789"/>
    </ligand>
</feature>
<keyword id="KW-0963">Cytoplasm</keyword>
<keyword id="KW-0489">Methyltransferase</keyword>
<keyword id="KW-0694">RNA-binding</keyword>
<keyword id="KW-0698">rRNA processing</keyword>
<keyword id="KW-0949">S-adenosyl-L-methionine</keyword>
<keyword id="KW-0808">Transferase</keyword>